<dbReference type="EMBL" id="M17451">
    <property type="protein sequence ID" value="AAA45056.1"/>
    <property type="status" value="ALT_FRAME"/>
    <property type="molecule type" value="Genomic_RNA"/>
</dbReference>
<dbReference type="Proteomes" id="UP000007699">
    <property type="component" value="Segment"/>
</dbReference>
<dbReference type="GO" id="GO:0033644">
    <property type="term" value="C:host cell membrane"/>
    <property type="evidence" value="ECO:0007669"/>
    <property type="project" value="UniProtKB-SubCell"/>
</dbReference>
<dbReference type="GO" id="GO:0016020">
    <property type="term" value="C:membrane"/>
    <property type="evidence" value="ECO:0007669"/>
    <property type="project" value="UniProtKB-UniRule"/>
</dbReference>
<dbReference type="GO" id="GO:0042609">
    <property type="term" value="F:CD4 receptor binding"/>
    <property type="evidence" value="ECO:0007669"/>
    <property type="project" value="UniProtKB-UniRule"/>
</dbReference>
<dbReference type="GO" id="GO:0005261">
    <property type="term" value="F:monoatomic cation channel activity"/>
    <property type="evidence" value="ECO:0007669"/>
    <property type="project" value="UniProtKB-UniRule"/>
</dbReference>
<dbReference type="GO" id="GO:0032801">
    <property type="term" value="P:receptor catabolic process"/>
    <property type="evidence" value="ECO:0007669"/>
    <property type="project" value="UniProtKB-UniRule"/>
</dbReference>
<dbReference type="GO" id="GO:0052170">
    <property type="term" value="P:symbiont-mediated suppression of host innate immune response"/>
    <property type="evidence" value="ECO:0007669"/>
    <property type="project" value="UniProtKB-KW"/>
</dbReference>
<dbReference type="GO" id="GO:0039502">
    <property type="term" value="P:symbiont-mediated suppression of host type I interferon-mediated signaling pathway"/>
    <property type="evidence" value="ECO:0007669"/>
    <property type="project" value="UniProtKB-UniRule"/>
</dbReference>
<dbReference type="GO" id="GO:0039587">
    <property type="term" value="P:symbiont-mediated-mediated suppression of host tetherin activity"/>
    <property type="evidence" value="ECO:0007669"/>
    <property type="project" value="UniProtKB-UniRule"/>
</dbReference>
<dbReference type="GO" id="GO:0019076">
    <property type="term" value="P:viral release from host cell"/>
    <property type="evidence" value="ECO:0007669"/>
    <property type="project" value="UniProtKB-UniRule"/>
</dbReference>
<dbReference type="Gene3D" id="1.10.195.10">
    <property type="entry name" value="HIV-1 VPU cytoplasmic domain"/>
    <property type="match status" value="1"/>
</dbReference>
<dbReference type="HAMAP" id="MF_04082">
    <property type="entry name" value="HIV_VPU"/>
    <property type="match status" value="1"/>
</dbReference>
<dbReference type="InterPro" id="IPR008187">
    <property type="entry name" value="Vpu"/>
</dbReference>
<dbReference type="InterPro" id="IPR009032">
    <property type="entry name" value="Vpu_cyt_dom_sf"/>
</dbReference>
<dbReference type="Pfam" id="PF00558">
    <property type="entry name" value="Vpu"/>
    <property type="match status" value="1"/>
</dbReference>
<dbReference type="SUPFAM" id="SSF57647">
    <property type="entry name" value="HIV-1 VPU cytoplasmic domain"/>
    <property type="match status" value="1"/>
</dbReference>
<keyword id="KW-0014">AIDS</keyword>
<keyword id="KW-0053">Apoptosis</keyword>
<keyword id="KW-1043">Host membrane</keyword>
<keyword id="KW-0945">Host-virus interaction</keyword>
<keyword id="KW-1090">Inhibition of host innate immune response by virus</keyword>
<keyword id="KW-1084">Inhibition of host tetherin by virus</keyword>
<keyword id="KW-0407">Ion channel</keyword>
<keyword id="KW-0406">Ion transport</keyword>
<keyword id="KW-0472">Membrane</keyword>
<keyword id="KW-0597">Phosphoprotein</keyword>
<keyword id="KW-1185">Reference proteome</keyword>
<keyword id="KW-0812">Transmembrane</keyword>
<keyword id="KW-1133">Transmembrane helix</keyword>
<keyword id="KW-0813">Transport</keyword>
<keyword id="KW-0899">Viral immunoevasion</keyword>
<gene>
    <name evidence="1" type="primary">vpu</name>
</gene>
<feature type="chain" id="PRO_0000085430" description="Protein Vpu">
    <location>
        <begin position="1"/>
        <end position="81"/>
    </location>
</feature>
<feature type="topological domain" description="Extracellular" evidence="1">
    <location>
        <begin position="1"/>
        <end position="7"/>
    </location>
</feature>
<feature type="transmembrane region" description="Helical" evidence="1">
    <location>
        <begin position="8"/>
        <end position="28"/>
    </location>
</feature>
<feature type="topological domain" description="Cytoplasmic" evidence="1">
    <location>
        <begin position="29"/>
        <end position="81"/>
    </location>
</feature>
<feature type="region of interest" description="Disordered" evidence="2">
    <location>
        <begin position="50"/>
        <end position="81"/>
    </location>
</feature>
<feature type="compositionally biased region" description="Acidic residues" evidence="2">
    <location>
        <begin position="53"/>
        <end position="64"/>
    </location>
</feature>
<feature type="compositionally biased region" description="Basic and acidic residues" evidence="2">
    <location>
        <begin position="70"/>
        <end position="81"/>
    </location>
</feature>
<feature type="modified residue" description="Phosphoserine; by host CK2" evidence="1">
    <location>
        <position position="53"/>
    </location>
</feature>
<feature type="modified residue" description="Phosphoserine; by host CK2" evidence="1">
    <location>
        <position position="57"/>
    </location>
</feature>
<organismHost>
    <name type="scientific">Homo sapiens</name>
    <name type="common">Human</name>
    <dbReference type="NCBI Taxonomy" id="9606"/>
</organismHost>
<protein>
    <recommendedName>
        <fullName evidence="1">Protein Vpu</fullName>
    </recommendedName>
    <alternativeName>
        <fullName evidence="1">U ORF protein</fullName>
    </alternativeName>
    <alternativeName>
        <fullName evidence="1">Viral protein U</fullName>
    </alternativeName>
</protein>
<comment type="function">
    <text evidence="1">Enhances virion budding by targeting host CD4 and Tetherin/BST2 to proteasome degradation. Degradation of CD4 prevents any unwanted premature interactions between viral Env and its host receptor CD4 in the endoplasmic reticulum. Degradation of antiretroviral protein Tetherin/BST2 is important for virion budding, as BST2 tethers new viral particles to the host cell membrane. Mechanistically, Vpu bridges either CD4 or BST2 to BTRC, a substrate recognition subunit of the Skp1/Cullin/F-box protein E3 ubiquitin ligase, induces their ubiquitination and subsequent proteasomal degradation. The alteration of the E3 ligase specificity by Vpu seems to promote the degradation of host IKBKB, leading to NF-kappa-B down-regulation and subsequent apoptosis. Acts as a viroporin that forms an oligomeric ion channel in membranes. Modulates the host DNA repair mechanisms to promote degradation of nuclear viral cDNA in cells that are already productively infected in order to suppress immune sensing and proviral hyper-integration (superinfection). Manipulates PML-NBs and modulates SUMOylation of host BLM protein thereby enhancing its DNA-end processing activity toward viral unintegrated linear DNA. Also inhibits RAD52-mediated homologous repair of viral cDNA, preventing the generation of dead-end circular forms of single copies of the long terminal repeat and permitting sustained nucleolytic attack.</text>
</comment>
<comment type="activity regulation">
    <text evidence="1">Ion channel activity is inhibited by hexamethylene amiloride in vitro.</text>
</comment>
<comment type="subunit">
    <text evidence="1">Homopentamer. Interacts with host CD4 and BRTC; these interactions induce proteasomal degradation of CD4. Interacts with host BST2; this interaction leads to the degradation of host BST2. Interacts with host FBXW11. Interacts with host AP1M1; this interaction plays a role in the mistrafficking and subsequent degradation of host BST2. Interacts with host RANBP2; this interaction allows Vpu to down-regulate host BLM sumoylation.</text>
</comment>
<comment type="subcellular location">
    <subcellularLocation>
        <location evidence="1">Host membrane</location>
        <topology evidence="1">Single-pass type I membrane protein</topology>
    </subcellularLocation>
</comment>
<comment type="domain">
    <text evidence="1">The N-terminus and transmembrane domains are required for self-oligomerization and proper virion budding, whereas the cytoplasmic domain is required for CD4 degradation. The cytoplasmic domain is composed of 2 amphipathic alpha helix that form a U-shape.</text>
</comment>
<comment type="PTM">
    <text evidence="1">Phosphorylated by host CK2. This phosphorylation is necessary for interaction with human BTRC and degradation of CD4.</text>
</comment>
<comment type="miscellaneous">
    <text evidence="1">HIV-1 lineages are divided in three main groups, M (for Major), O (for Outlier), and N (for New, or Non-M, Non-O). The vast majority of strains found worldwide belong to the group M. Group O seems to be endemic to and largely confined to Cameroon and neighboring countries in West Central Africa, where these viruses represent a small minority of HIV-1 strains. The group N is represented by a limited number of isolates from Cameroonian persons. The group M is further subdivided in 9 clades or subtypes (A to D, F to H, J and K).</text>
</comment>
<comment type="similarity">
    <text evidence="1">Belongs to the HIV-1 VPU protein family.</text>
</comment>
<comment type="sequence caution">
    <conflict type="frameshift">
        <sequence resource="EMBL-CDS" id="AAA45056"/>
    </conflict>
</comment>
<sequence length="81" mass="9089">MQSLEILAIVALVVAAILAIVVWTIVGIEIRKTLRQKKIDRLIDRIRERAEDSGNESDGDEEELSALVEMGHHAPWDVDDL</sequence>
<organism>
    <name type="scientific">Human immunodeficiency virus type 1 group M subtype B (isolate RF/HAT3)</name>
    <name type="common">HIV-1</name>
    <dbReference type="NCBI Taxonomy" id="11701"/>
    <lineage>
        <taxon>Viruses</taxon>
        <taxon>Riboviria</taxon>
        <taxon>Pararnavirae</taxon>
        <taxon>Artverviricota</taxon>
        <taxon>Revtraviricetes</taxon>
        <taxon>Ortervirales</taxon>
        <taxon>Retroviridae</taxon>
        <taxon>Orthoretrovirinae</taxon>
        <taxon>Lentivirus</taxon>
        <taxon>Human immunodeficiency virus type 1</taxon>
    </lineage>
</organism>
<reference key="1">
    <citation type="journal article" date="1986" name="Cell">
        <title>Identification and characterization of conserved and variable regions in the envelope gene of HTLV-III/LAV, the retrovirus of AIDS.</title>
        <authorList>
            <person name="Starcich B.R."/>
            <person name="Hahn B.H."/>
            <person name="Shaw G.M."/>
            <person name="McNeely P.D."/>
            <person name="Modrow S."/>
            <person name="Wolf H."/>
            <person name="Parks E.S."/>
            <person name="Parks W.P."/>
            <person name="Josephs S.F."/>
            <person name="Gallo R.C."/>
            <person name="Wong-Staal F."/>
        </authorList>
    </citation>
    <scope>NUCLEOTIDE SEQUENCE [GENOMIC RNA]</scope>
</reference>
<evidence type="ECO:0000255" key="1">
    <source>
        <dbReference type="HAMAP-Rule" id="MF_04082"/>
    </source>
</evidence>
<evidence type="ECO:0000256" key="2">
    <source>
        <dbReference type="SAM" id="MobiDB-lite"/>
    </source>
</evidence>
<proteinExistence type="inferred from homology"/>
<accession>P12518</accession>
<name>VPU_HV1RH</name>